<gene>
    <name evidence="2" type="primary">tal</name>
    <name type="ordered locus">VIBHAR_06256</name>
</gene>
<comment type="function">
    <text evidence="2">Transaldolase is important for the balance of metabolites in the pentose-phosphate pathway.</text>
</comment>
<comment type="catalytic activity">
    <reaction evidence="2">
        <text>D-sedoheptulose 7-phosphate + D-glyceraldehyde 3-phosphate = D-erythrose 4-phosphate + beta-D-fructose 6-phosphate</text>
        <dbReference type="Rhea" id="RHEA:17053"/>
        <dbReference type="ChEBI" id="CHEBI:16897"/>
        <dbReference type="ChEBI" id="CHEBI:57483"/>
        <dbReference type="ChEBI" id="CHEBI:57634"/>
        <dbReference type="ChEBI" id="CHEBI:59776"/>
        <dbReference type="EC" id="2.2.1.2"/>
    </reaction>
</comment>
<comment type="pathway">
    <text evidence="2">Carbohydrate degradation; pentose phosphate pathway; D-glyceraldehyde 3-phosphate and beta-D-fructose 6-phosphate from D-ribose 5-phosphate and D-xylulose 5-phosphate (non-oxidative stage): step 2/3.</text>
</comment>
<comment type="subunit">
    <text evidence="1">Homodimer.</text>
</comment>
<comment type="subcellular location">
    <subcellularLocation>
        <location evidence="2">Cytoplasm</location>
    </subcellularLocation>
</comment>
<comment type="similarity">
    <text evidence="2">Belongs to the transaldolase family. Type 1 subfamily.</text>
</comment>
<name>TAL_VIBC1</name>
<evidence type="ECO:0000250" key="1"/>
<evidence type="ECO:0000255" key="2">
    <source>
        <dbReference type="HAMAP-Rule" id="MF_00492"/>
    </source>
</evidence>
<dbReference type="EC" id="2.2.1.2" evidence="2"/>
<dbReference type="EMBL" id="CP000790">
    <property type="protein sequence ID" value="ABU74148.1"/>
    <property type="molecule type" value="Genomic_DNA"/>
</dbReference>
<dbReference type="RefSeq" id="WP_005425862.1">
    <property type="nucleotide sequence ID" value="NC_022270.1"/>
</dbReference>
<dbReference type="SMR" id="A7N1Z7"/>
<dbReference type="GeneID" id="83584931"/>
<dbReference type="KEGG" id="vha:VIBHAR_06256"/>
<dbReference type="PATRIC" id="fig|338187.25.peg.4084"/>
<dbReference type="UniPathway" id="UPA00115">
    <property type="reaction ID" value="UER00414"/>
</dbReference>
<dbReference type="Proteomes" id="UP000008152">
    <property type="component" value="Chromosome II"/>
</dbReference>
<dbReference type="GO" id="GO:0005829">
    <property type="term" value="C:cytosol"/>
    <property type="evidence" value="ECO:0007669"/>
    <property type="project" value="TreeGrafter"/>
</dbReference>
<dbReference type="GO" id="GO:0004801">
    <property type="term" value="F:transaldolase activity"/>
    <property type="evidence" value="ECO:0000250"/>
    <property type="project" value="UniProtKB"/>
</dbReference>
<dbReference type="GO" id="GO:0005975">
    <property type="term" value="P:carbohydrate metabolic process"/>
    <property type="evidence" value="ECO:0007669"/>
    <property type="project" value="InterPro"/>
</dbReference>
<dbReference type="GO" id="GO:0006098">
    <property type="term" value="P:pentose-phosphate shunt"/>
    <property type="evidence" value="ECO:0007669"/>
    <property type="project" value="UniProtKB-UniRule"/>
</dbReference>
<dbReference type="CDD" id="cd00957">
    <property type="entry name" value="Transaldolase_TalAB"/>
    <property type="match status" value="1"/>
</dbReference>
<dbReference type="FunFam" id="3.20.20.70:FF:000002">
    <property type="entry name" value="Transaldolase"/>
    <property type="match status" value="1"/>
</dbReference>
<dbReference type="Gene3D" id="3.20.20.70">
    <property type="entry name" value="Aldolase class I"/>
    <property type="match status" value="1"/>
</dbReference>
<dbReference type="HAMAP" id="MF_00492">
    <property type="entry name" value="Transaldolase_1"/>
    <property type="match status" value="1"/>
</dbReference>
<dbReference type="InterPro" id="IPR013785">
    <property type="entry name" value="Aldolase_TIM"/>
</dbReference>
<dbReference type="InterPro" id="IPR001585">
    <property type="entry name" value="TAL/FSA"/>
</dbReference>
<dbReference type="InterPro" id="IPR004730">
    <property type="entry name" value="Transaldolase_1"/>
</dbReference>
<dbReference type="InterPro" id="IPR018225">
    <property type="entry name" value="Transaldolase_AS"/>
</dbReference>
<dbReference type="NCBIfam" id="NF009001">
    <property type="entry name" value="PRK12346.1"/>
    <property type="match status" value="1"/>
</dbReference>
<dbReference type="NCBIfam" id="TIGR00874">
    <property type="entry name" value="talAB"/>
    <property type="match status" value="1"/>
</dbReference>
<dbReference type="PANTHER" id="PTHR10683">
    <property type="entry name" value="TRANSALDOLASE"/>
    <property type="match status" value="1"/>
</dbReference>
<dbReference type="PANTHER" id="PTHR10683:SF18">
    <property type="entry name" value="TRANSALDOLASE"/>
    <property type="match status" value="1"/>
</dbReference>
<dbReference type="Pfam" id="PF00923">
    <property type="entry name" value="TAL_FSA"/>
    <property type="match status" value="1"/>
</dbReference>
<dbReference type="SUPFAM" id="SSF51569">
    <property type="entry name" value="Aldolase"/>
    <property type="match status" value="1"/>
</dbReference>
<dbReference type="PROSITE" id="PS01054">
    <property type="entry name" value="TRANSALDOLASE_1"/>
    <property type="match status" value="1"/>
</dbReference>
<dbReference type="PROSITE" id="PS00958">
    <property type="entry name" value="TRANSALDOLASE_2"/>
    <property type="match status" value="1"/>
</dbReference>
<sequence length="316" mass="34783">MSNKLEQLRKLTTVVADTGEIDAIKKYQPEDATTNPSLILKAAQIEEYAPLIDASIEYAKAQSNDKAQQVQDTCDMLAVNIGKEILKTIPGRISTEVDARLSYDTEGSVAKARQLVKMYNDAGITNDRILIKLASTWEGIRAAEILEKEGINCNLTLLFSFAQARACAEAGVFLISPFVGRIMDWYKAKEGRDFEASEDPGVISVTDIYNYYKDYGYNTVVMGASFRNIGEILELAGCDRLTIAPALLAELEAAEGEVVEKLVDSKGSKERPAPMSHAEFLWEHNLDAMAVEKVAEGIRNFAVDQGKLEDMIAAKL</sequence>
<reference key="1">
    <citation type="submission" date="2007-08" db="EMBL/GenBank/DDBJ databases">
        <authorList>
            <consortium name="The Vibrio harveyi Genome Sequencing Project"/>
            <person name="Bassler B."/>
            <person name="Clifton S.W."/>
            <person name="Fulton L."/>
            <person name="Delehaunty K."/>
            <person name="Fronick C."/>
            <person name="Harrison M."/>
            <person name="Markivic C."/>
            <person name="Fulton R."/>
            <person name="Tin-Wollam A.-M."/>
            <person name="Shah N."/>
            <person name="Pepin K."/>
            <person name="Nash W."/>
            <person name="Thiruvilangam P."/>
            <person name="Bhonagiri V."/>
            <person name="Waters C."/>
            <person name="Tu K.C."/>
            <person name="Irgon J."/>
            <person name="Wilson R.K."/>
        </authorList>
    </citation>
    <scope>NUCLEOTIDE SEQUENCE [LARGE SCALE GENOMIC DNA]</scope>
    <source>
        <strain>ATCC BAA-1116 / BB120</strain>
    </source>
</reference>
<proteinExistence type="inferred from homology"/>
<feature type="chain" id="PRO_1000014533" description="Transaldolase">
    <location>
        <begin position="1"/>
        <end position="316"/>
    </location>
</feature>
<feature type="active site" description="Schiff-base intermediate with substrate" evidence="2">
    <location>
        <position position="132"/>
    </location>
</feature>
<keyword id="KW-0963">Cytoplasm</keyword>
<keyword id="KW-0570">Pentose shunt</keyword>
<keyword id="KW-0704">Schiff base</keyword>
<keyword id="KW-0808">Transferase</keyword>
<organism>
    <name type="scientific">Vibrio campbellii (strain ATCC BAA-1116)</name>
    <dbReference type="NCBI Taxonomy" id="2902295"/>
    <lineage>
        <taxon>Bacteria</taxon>
        <taxon>Pseudomonadati</taxon>
        <taxon>Pseudomonadota</taxon>
        <taxon>Gammaproteobacteria</taxon>
        <taxon>Vibrionales</taxon>
        <taxon>Vibrionaceae</taxon>
        <taxon>Vibrio</taxon>
    </lineage>
</organism>
<protein>
    <recommendedName>
        <fullName evidence="2">Transaldolase</fullName>
        <ecNumber evidence="2">2.2.1.2</ecNumber>
    </recommendedName>
</protein>
<accession>A7N1Z7</accession>